<accession>A2WSZ6</accession>
<evidence type="ECO:0000250" key="1"/>
<evidence type="ECO:0000255" key="2">
    <source>
        <dbReference type="PROSITE-ProRule" id="PRU00856"/>
    </source>
</evidence>
<evidence type="ECO:0000256" key="3">
    <source>
        <dbReference type="SAM" id="MobiDB-lite"/>
    </source>
</evidence>
<name>ZHD5_ORYSI</name>
<dbReference type="EMBL" id="CM000126">
    <property type="protein sequence ID" value="EAY75092.1"/>
    <property type="molecule type" value="Genomic_DNA"/>
</dbReference>
<dbReference type="SMR" id="A2WSZ6"/>
<dbReference type="STRING" id="39946.A2WSZ6"/>
<dbReference type="EnsemblPlants" id="BGIOSGA001155-TA">
    <property type="protein sequence ID" value="BGIOSGA001155-PA"/>
    <property type="gene ID" value="BGIOSGA001155"/>
</dbReference>
<dbReference type="EnsemblPlants" id="OsMH63_01G026230_01">
    <property type="protein sequence ID" value="OsMH63_01G026230_01"/>
    <property type="gene ID" value="OsMH63_01G026230"/>
</dbReference>
<dbReference type="Gramene" id="BGIOSGA001155-TA">
    <property type="protein sequence ID" value="BGIOSGA001155-PA"/>
    <property type="gene ID" value="BGIOSGA001155"/>
</dbReference>
<dbReference type="Gramene" id="OsMH63_01G026230_01">
    <property type="protein sequence ID" value="OsMH63_01G026230_01"/>
    <property type="gene ID" value="OsMH63_01G026230"/>
</dbReference>
<dbReference type="HOGENOM" id="CLU_039237_2_2_1"/>
<dbReference type="OMA" id="TRCRYHE"/>
<dbReference type="Proteomes" id="UP000007015">
    <property type="component" value="Chromosome 1"/>
</dbReference>
<dbReference type="GO" id="GO:0005634">
    <property type="term" value="C:nucleus"/>
    <property type="evidence" value="ECO:0007669"/>
    <property type="project" value="UniProtKB-SubCell"/>
</dbReference>
<dbReference type="GO" id="GO:0003700">
    <property type="term" value="F:DNA-binding transcription factor activity"/>
    <property type="evidence" value="ECO:0007669"/>
    <property type="project" value="TreeGrafter"/>
</dbReference>
<dbReference type="GO" id="GO:0000976">
    <property type="term" value="F:transcription cis-regulatory region binding"/>
    <property type="evidence" value="ECO:0007669"/>
    <property type="project" value="TreeGrafter"/>
</dbReference>
<dbReference type="GO" id="GO:0008270">
    <property type="term" value="F:zinc ion binding"/>
    <property type="evidence" value="ECO:0007669"/>
    <property type="project" value="UniProtKB-KW"/>
</dbReference>
<dbReference type="GO" id="GO:0050793">
    <property type="term" value="P:regulation of developmental process"/>
    <property type="evidence" value="ECO:0007669"/>
    <property type="project" value="TreeGrafter"/>
</dbReference>
<dbReference type="FunFam" id="1.10.10.60:FF:000257">
    <property type="entry name" value="Zinc-finger homeodomain protein 2"/>
    <property type="match status" value="1"/>
</dbReference>
<dbReference type="Gene3D" id="1.10.10.60">
    <property type="entry name" value="Homeodomain-like"/>
    <property type="match status" value="1"/>
</dbReference>
<dbReference type="InterPro" id="IPR009057">
    <property type="entry name" value="Homeodomain-like_sf"/>
</dbReference>
<dbReference type="InterPro" id="IPR006455">
    <property type="entry name" value="Homeodomain_ZF_HD"/>
</dbReference>
<dbReference type="InterPro" id="IPR006456">
    <property type="entry name" value="ZF_HD_homeobox_Cys/His_dimer"/>
</dbReference>
<dbReference type="NCBIfam" id="TIGR01565">
    <property type="entry name" value="homeo_ZF_HD"/>
    <property type="match status" value="1"/>
</dbReference>
<dbReference type="NCBIfam" id="TIGR01566">
    <property type="entry name" value="ZF_HD_prot_N"/>
    <property type="match status" value="1"/>
</dbReference>
<dbReference type="PANTHER" id="PTHR31948">
    <property type="entry name" value="ZINC-FINGER HOMEODOMAIN PROTEIN 2"/>
    <property type="match status" value="1"/>
</dbReference>
<dbReference type="PANTHER" id="PTHR31948:SF95">
    <property type="entry name" value="ZINC-FINGER HOMEODOMAIN PROTEIN 5"/>
    <property type="match status" value="1"/>
</dbReference>
<dbReference type="Pfam" id="PF04770">
    <property type="entry name" value="ZF-HD_dimer"/>
    <property type="match status" value="1"/>
</dbReference>
<dbReference type="SUPFAM" id="SSF46689">
    <property type="entry name" value="Homeodomain-like"/>
    <property type="match status" value="1"/>
</dbReference>
<dbReference type="PROSITE" id="PS51523">
    <property type="entry name" value="ZF_HD_DIMER"/>
    <property type="match status" value="1"/>
</dbReference>
<comment type="function">
    <text evidence="1">Putative transcription factor.</text>
</comment>
<comment type="subunit">
    <text evidence="1">Homo- and heterodimer with other ZFHD proteins.</text>
</comment>
<comment type="subcellular location">
    <subcellularLocation>
        <location evidence="1">Nucleus</location>
    </subcellularLocation>
</comment>
<comment type="domain">
    <text>The homeodomain differs form the typical one by having namely 4 instead of 3 extra amino acids inserted in the loop between helix 1 and helix 2.</text>
</comment>
<organism>
    <name type="scientific">Oryza sativa subsp. indica</name>
    <name type="common">Rice</name>
    <dbReference type="NCBI Taxonomy" id="39946"/>
    <lineage>
        <taxon>Eukaryota</taxon>
        <taxon>Viridiplantae</taxon>
        <taxon>Streptophyta</taxon>
        <taxon>Embryophyta</taxon>
        <taxon>Tracheophyta</taxon>
        <taxon>Spermatophyta</taxon>
        <taxon>Magnoliopsida</taxon>
        <taxon>Liliopsida</taxon>
        <taxon>Poales</taxon>
        <taxon>Poaceae</taxon>
        <taxon>BOP clade</taxon>
        <taxon>Oryzoideae</taxon>
        <taxon>Oryzeae</taxon>
        <taxon>Oryzinae</taxon>
        <taxon>Oryza</taxon>
        <taxon>Oryza sativa</taxon>
    </lineage>
</organism>
<reference key="1">
    <citation type="journal article" date="2005" name="PLoS Biol.">
        <title>The genomes of Oryza sativa: a history of duplications.</title>
        <authorList>
            <person name="Yu J."/>
            <person name="Wang J."/>
            <person name="Lin W."/>
            <person name="Li S."/>
            <person name="Li H."/>
            <person name="Zhou J."/>
            <person name="Ni P."/>
            <person name="Dong W."/>
            <person name="Hu S."/>
            <person name="Zeng C."/>
            <person name="Zhang J."/>
            <person name="Zhang Y."/>
            <person name="Li R."/>
            <person name="Xu Z."/>
            <person name="Li S."/>
            <person name="Li X."/>
            <person name="Zheng H."/>
            <person name="Cong L."/>
            <person name="Lin L."/>
            <person name="Yin J."/>
            <person name="Geng J."/>
            <person name="Li G."/>
            <person name="Shi J."/>
            <person name="Liu J."/>
            <person name="Lv H."/>
            <person name="Li J."/>
            <person name="Wang J."/>
            <person name="Deng Y."/>
            <person name="Ran L."/>
            <person name="Shi X."/>
            <person name="Wang X."/>
            <person name="Wu Q."/>
            <person name="Li C."/>
            <person name="Ren X."/>
            <person name="Wang J."/>
            <person name="Wang X."/>
            <person name="Li D."/>
            <person name="Liu D."/>
            <person name="Zhang X."/>
            <person name="Ji Z."/>
            <person name="Zhao W."/>
            <person name="Sun Y."/>
            <person name="Zhang Z."/>
            <person name="Bao J."/>
            <person name="Han Y."/>
            <person name="Dong L."/>
            <person name="Ji J."/>
            <person name="Chen P."/>
            <person name="Wu S."/>
            <person name="Liu J."/>
            <person name="Xiao Y."/>
            <person name="Bu D."/>
            <person name="Tan J."/>
            <person name="Yang L."/>
            <person name="Ye C."/>
            <person name="Zhang J."/>
            <person name="Xu J."/>
            <person name="Zhou Y."/>
            <person name="Yu Y."/>
            <person name="Zhang B."/>
            <person name="Zhuang S."/>
            <person name="Wei H."/>
            <person name="Liu B."/>
            <person name="Lei M."/>
            <person name="Yu H."/>
            <person name="Li Y."/>
            <person name="Xu H."/>
            <person name="Wei S."/>
            <person name="He X."/>
            <person name="Fang L."/>
            <person name="Zhang Z."/>
            <person name="Zhang Y."/>
            <person name="Huang X."/>
            <person name="Su Z."/>
            <person name="Tong W."/>
            <person name="Li J."/>
            <person name="Tong Z."/>
            <person name="Li S."/>
            <person name="Ye J."/>
            <person name="Wang L."/>
            <person name="Fang L."/>
            <person name="Lei T."/>
            <person name="Chen C.-S."/>
            <person name="Chen H.-C."/>
            <person name="Xu Z."/>
            <person name="Li H."/>
            <person name="Huang H."/>
            <person name="Zhang F."/>
            <person name="Xu H."/>
            <person name="Li N."/>
            <person name="Zhao C."/>
            <person name="Li S."/>
            <person name="Dong L."/>
            <person name="Huang Y."/>
            <person name="Li L."/>
            <person name="Xi Y."/>
            <person name="Qi Q."/>
            <person name="Li W."/>
            <person name="Zhang B."/>
            <person name="Hu W."/>
            <person name="Zhang Y."/>
            <person name="Tian X."/>
            <person name="Jiao Y."/>
            <person name="Liang X."/>
            <person name="Jin J."/>
            <person name="Gao L."/>
            <person name="Zheng W."/>
            <person name="Hao B."/>
            <person name="Liu S.-M."/>
            <person name="Wang W."/>
            <person name="Yuan L."/>
            <person name="Cao M."/>
            <person name="McDermott J."/>
            <person name="Samudrala R."/>
            <person name="Wang J."/>
            <person name="Wong G.K.-S."/>
            <person name="Yang H."/>
        </authorList>
    </citation>
    <scope>NUCLEOTIDE SEQUENCE [LARGE SCALE GENOMIC DNA]</scope>
    <source>
        <strain>cv. 93-11</strain>
    </source>
</reference>
<keyword id="KW-0238">DNA-binding</keyword>
<keyword id="KW-0371">Homeobox</keyword>
<keyword id="KW-0479">Metal-binding</keyword>
<keyword id="KW-0539">Nucleus</keyword>
<keyword id="KW-1185">Reference proteome</keyword>
<keyword id="KW-0804">Transcription</keyword>
<keyword id="KW-0805">Transcription regulation</keyword>
<keyword id="KW-0862">Zinc</keyword>
<keyword id="KW-0863">Zinc-finger</keyword>
<proteinExistence type="inferred from homology"/>
<feature type="chain" id="PRO_0000426042" description="Zinc-finger homeodomain protein 5">
    <location>
        <begin position="1"/>
        <end position="232"/>
    </location>
</feature>
<feature type="zinc finger region" description="ZF-HD dimerization-type; degenerate" evidence="2">
    <location>
        <begin position="40"/>
        <end position="86"/>
    </location>
</feature>
<feature type="DNA-binding region" description="Homeobox">
    <location>
        <begin position="159"/>
        <end position="222"/>
    </location>
</feature>
<feature type="region of interest" description="Disordered" evidence="3">
    <location>
        <begin position="1"/>
        <end position="25"/>
    </location>
</feature>
<feature type="region of interest" description="Disordered" evidence="3">
    <location>
        <begin position="126"/>
        <end position="170"/>
    </location>
</feature>
<feature type="compositionally biased region" description="Acidic residues" evidence="3">
    <location>
        <begin position="1"/>
        <end position="11"/>
    </location>
</feature>
<feature type="site" description="Required for DNA-binding" evidence="1">
    <location>
        <position position="211"/>
    </location>
</feature>
<protein>
    <recommendedName>
        <fullName>Zinc-finger homeodomain protein 5</fullName>
    </recommendedName>
</protein>
<gene>
    <name type="primary">ZHD5</name>
    <name type="ORF">OsI_02986</name>
</gene>
<sequence length="232" mass="25399">MELSEHEEDAGDVGGGCSSPPTPPHRVLTSAAPETIRCRYHECLRNHAAASGGHVVDGCGEFMPASTEEPLACAACGCHRSFHRRDPSPGRAGAARLLQLHLPASINSRAPPALLLPPAAAASKQGLPFPGYGTPSGGTGTTTASSSDERLRPSPVQPRRRSRTTFTREQKEQMLAFAERVGWRIQRQEEATVEHFCAQVGVRRQALKVWMHNNKHSFKQKQQQENRQEQQQ</sequence>